<accession>Q7NYC5</accession>
<proteinExistence type="inferred from homology"/>
<keyword id="KW-0963">Cytoplasm</keyword>
<keyword id="KW-0396">Initiation factor</keyword>
<keyword id="KW-0648">Protein biosynthesis</keyword>
<keyword id="KW-1185">Reference proteome</keyword>
<reference key="1">
    <citation type="journal article" date="2003" name="Proc. Natl. Acad. Sci. U.S.A.">
        <title>The complete genome sequence of Chromobacterium violaceum reveals remarkable and exploitable bacterial adaptability.</title>
        <authorList>
            <person name="Vasconcelos A.T.R."/>
            <person name="de Almeida D.F."/>
            <person name="Hungria M."/>
            <person name="Guimaraes C.T."/>
            <person name="Antonio R.V."/>
            <person name="Almeida F.C."/>
            <person name="de Almeida L.G.P."/>
            <person name="de Almeida R."/>
            <person name="Alves-Gomes J.A."/>
            <person name="Andrade E.M."/>
            <person name="Araripe J."/>
            <person name="de Araujo M.F.F."/>
            <person name="Astolfi-Filho S."/>
            <person name="Azevedo V."/>
            <person name="Baptista A.J."/>
            <person name="Bataus L.A.M."/>
            <person name="Batista J.S."/>
            <person name="Belo A."/>
            <person name="van den Berg C."/>
            <person name="Bogo M."/>
            <person name="Bonatto S."/>
            <person name="Bordignon J."/>
            <person name="Brigido M.M."/>
            <person name="Brito C.A."/>
            <person name="Brocchi M."/>
            <person name="Burity H.A."/>
            <person name="Camargo A.A."/>
            <person name="Cardoso D.D.P."/>
            <person name="Carneiro N.P."/>
            <person name="Carraro D.M."/>
            <person name="Carvalho C.M.B."/>
            <person name="Cascardo J.C.M."/>
            <person name="Cavada B.S."/>
            <person name="Chueire L.M.O."/>
            <person name="Creczynski-Pasa T.B."/>
            <person name="Cunha-Junior N.C."/>
            <person name="Fagundes N."/>
            <person name="Falcao C.L."/>
            <person name="Fantinatti F."/>
            <person name="Farias I.P."/>
            <person name="Felipe M.S.S."/>
            <person name="Ferrari L.P."/>
            <person name="Ferro J.A."/>
            <person name="Ferro M.I.T."/>
            <person name="Franco G.R."/>
            <person name="Freitas N.S.A."/>
            <person name="Furlan L.R."/>
            <person name="Gazzinelli R.T."/>
            <person name="Gomes E.A."/>
            <person name="Goncalves P.R."/>
            <person name="Grangeiro T.B."/>
            <person name="Grattapaglia D."/>
            <person name="Grisard E.C."/>
            <person name="Hanna E.S."/>
            <person name="Jardim S.N."/>
            <person name="Laurino J."/>
            <person name="Leoi L.C.T."/>
            <person name="Lima L.F.A."/>
            <person name="Loureiro M.F."/>
            <person name="Lyra M.C.C.P."/>
            <person name="Madeira H.M.F."/>
            <person name="Manfio G.P."/>
            <person name="Maranhao A.Q."/>
            <person name="Martins W.S."/>
            <person name="di Mauro S.M.Z."/>
            <person name="de Medeiros S.R.B."/>
            <person name="Meissner R.V."/>
            <person name="Moreira M.A.M."/>
            <person name="Nascimento F.F."/>
            <person name="Nicolas M.F."/>
            <person name="Oliveira J.G."/>
            <person name="Oliveira S.C."/>
            <person name="Paixao R.F.C."/>
            <person name="Parente J.A."/>
            <person name="Pedrosa F.O."/>
            <person name="Pena S.D.J."/>
            <person name="Pereira J.O."/>
            <person name="Pereira M."/>
            <person name="Pinto L.S.R.C."/>
            <person name="Pinto L.S."/>
            <person name="Porto J.I.R."/>
            <person name="Potrich D.P."/>
            <person name="Ramalho-Neto C.E."/>
            <person name="Reis A.M.M."/>
            <person name="Rigo L.U."/>
            <person name="Rondinelli E."/>
            <person name="Santos E.B.P."/>
            <person name="Santos F.R."/>
            <person name="Schneider M.P.C."/>
            <person name="Seuanez H.N."/>
            <person name="Silva A.M.R."/>
            <person name="da Silva A.L.C."/>
            <person name="Silva D.W."/>
            <person name="Silva R."/>
            <person name="Simoes I.C."/>
            <person name="Simon D."/>
            <person name="Soares C.M.A."/>
            <person name="Soares R.B.A."/>
            <person name="Souza E.M."/>
            <person name="Souza K.R.L."/>
            <person name="Souza R.C."/>
            <person name="Steffens M.B.R."/>
            <person name="Steindel M."/>
            <person name="Teixeira S.R."/>
            <person name="Urmenyi T."/>
            <person name="Vettore A."/>
            <person name="Wassem R."/>
            <person name="Zaha A."/>
            <person name="Simpson A.J.G."/>
        </authorList>
    </citation>
    <scope>NUCLEOTIDE SEQUENCE [LARGE SCALE GENOMIC DNA]</scope>
    <source>
        <strain>ATCC 12472 / DSM 30191 / JCM 1249 / CCUG 213 / NBRC 12614 / NCIMB 9131 / NCTC 9757 / MK</strain>
    </source>
</reference>
<organism>
    <name type="scientific">Chromobacterium violaceum (strain ATCC 12472 / DSM 30191 / JCM 1249 / CCUG 213 / NBRC 12614 / NCIMB 9131 / NCTC 9757 / MK)</name>
    <dbReference type="NCBI Taxonomy" id="243365"/>
    <lineage>
        <taxon>Bacteria</taxon>
        <taxon>Pseudomonadati</taxon>
        <taxon>Pseudomonadota</taxon>
        <taxon>Betaproteobacteria</taxon>
        <taxon>Neisseriales</taxon>
        <taxon>Chromobacteriaceae</taxon>
        <taxon>Chromobacterium</taxon>
    </lineage>
</organism>
<comment type="function">
    <text evidence="1">IF-3 binds to the 30S ribosomal subunit and shifts the equilibrium between 70S ribosomes and their 50S and 30S subunits in favor of the free subunits, thus enhancing the availability of 30S subunits on which protein synthesis initiation begins.</text>
</comment>
<comment type="subunit">
    <text evidence="1">Monomer.</text>
</comment>
<comment type="subcellular location">
    <subcellularLocation>
        <location evidence="1">Cytoplasm</location>
    </subcellularLocation>
</comment>
<comment type="similarity">
    <text evidence="1">Belongs to the IF-3 family.</text>
</comment>
<comment type="sequence caution" evidence="2">
    <conflict type="erroneous initiation">
        <sequence resource="EMBL-CDS" id="AAQ59024"/>
    </conflict>
</comment>
<name>IF3_CHRVO</name>
<gene>
    <name evidence="1" type="primary">infC</name>
    <name type="ordered locus">CV_1349</name>
</gene>
<protein>
    <recommendedName>
        <fullName evidence="1">Translation initiation factor IF-3</fullName>
    </recommendedName>
</protein>
<feature type="chain" id="PRO_0000177507" description="Translation initiation factor IF-3">
    <location>
        <begin position="1"/>
        <end position="175"/>
    </location>
</feature>
<sequence length="175" mass="19966">MSAIAQEREARINGEITAREIRLVGKEGEQIGIVSLREAMALAEENDVDLVEISPTAQPPVCKLMDYGKYKYEQSKKRHEAKQKQKQVQIKEIKFRPGTDDGDYNVKLRNLVRFLTEGDKAKVTLRFRGREMAHQDIGLALLKRVEADLAEVGTVEQFPRLEGRQMVMMIAPKKK</sequence>
<dbReference type="EMBL" id="AE016825">
    <property type="protein sequence ID" value="AAQ59024.1"/>
    <property type="status" value="ALT_INIT"/>
    <property type="molecule type" value="Genomic_DNA"/>
</dbReference>
<dbReference type="RefSeq" id="WP_080508936.1">
    <property type="nucleotide sequence ID" value="NC_005085.1"/>
</dbReference>
<dbReference type="SMR" id="Q7NYC5"/>
<dbReference type="STRING" id="243365.CV_1349"/>
<dbReference type="KEGG" id="cvi:CV_1349"/>
<dbReference type="eggNOG" id="COG0290">
    <property type="taxonomic scope" value="Bacteria"/>
</dbReference>
<dbReference type="HOGENOM" id="CLU_054919_3_2_4"/>
<dbReference type="OrthoDB" id="9806014at2"/>
<dbReference type="Proteomes" id="UP000001424">
    <property type="component" value="Chromosome"/>
</dbReference>
<dbReference type="GO" id="GO:0005829">
    <property type="term" value="C:cytosol"/>
    <property type="evidence" value="ECO:0007669"/>
    <property type="project" value="TreeGrafter"/>
</dbReference>
<dbReference type="GO" id="GO:0016020">
    <property type="term" value="C:membrane"/>
    <property type="evidence" value="ECO:0007669"/>
    <property type="project" value="TreeGrafter"/>
</dbReference>
<dbReference type="GO" id="GO:0043022">
    <property type="term" value="F:ribosome binding"/>
    <property type="evidence" value="ECO:0007669"/>
    <property type="project" value="TreeGrafter"/>
</dbReference>
<dbReference type="GO" id="GO:0003743">
    <property type="term" value="F:translation initiation factor activity"/>
    <property type="evidence" value="ECO:0007669"/>
    <property type="project" value="UniProtKB-UniRule"/>
</dbReference>
<dbReference type="GO" id="GO:0032790">
    <property type="term" value="P:ribosome disassembly"/>
    <property type="evidence" value="ECO:0007669"/>
    <property type="project" value="TreeGrafter"/>
</dbReference>
<dbReference type="FunFam" id="3.10.20.80:FF:000001">
    <property type="entry name" value="Translation initiation factor IF-3"/>
    <property type="match status" value="1"/>
</dbReference>
<dbReference type="FunFam" id="3.30.110.10:FF:000001">
    <property type="entry name" value="Translation initiation factor IF-3"/>
    <property type="match status" value="1"/>
</dbReference>
<dbReference type="Gene3D" id="3.30.110.10">
    <property type="entry name" value="Translation initiation factor 3 (IF-3), C-terminal domain"/>
    <property type="match status" value="1"/>
</dbReference>
<dbReference type="Gene3D" id="3.10.20.80">
    <property type="entry name" value="Translation initiation factor 3 (IF-3), N-terminal domain"/>
    <property type="match status" value="1"/>
</dbReference>
<dbReference type="HAMAP" id="MF_00080">
    <property type="entry name" value="IF_3"/>
    <property type="match status" value="1"/>
</dbReference>
<dbReference type="InterPro" id="IPR036788">
    <property type="entry name" value="T_IF-3_C_sf"/>
</dbReference>
<dbReference type="InterPro" id="IPR036787">
    <property type="entry name" value="T_IF-3_N_sf"/>
</dbReference>
<dbReference type="InterPro" id="IPR019813">
    <property type="entry name" value="Translation_initiation_fac3_CS"/>
</dbReference>
<dbReference type="InterPro" id="IPR001288">
    <property type="entry name" value="Translation_initiation_fac_3"/>
</dbReference>
<dbReference type="InterPro" id="IPR019815">
    <property type="entry name" value="Translation_initiation_fac_3_C"/>
</dbReference>
<dbReference type="InterPro" id="IPR019814">
    <property type="entry name" value="Translation_initiation_fac_3_N"/>
</dbReference>
<dbReference type="NCBIfam" id="TIGR00168">
    <property type="entry name" value="infC"/>
    <property type="match status" value="1"/>
</dbReference>
<dbReference type="PANTHER" id="PTHR10938">
    <property type="entry name" value="TRANSLATION INITIATION FACTOR IF-3"/>
    <property type="match status" value="1"/>
</dbReference>
<dbReference type="PANTHER" id="PTHR10938:SF0">
    <property type="entry name" value="TRANSLATION INITIATION FACTOR IF-3, MITOCHONDRIAL"/>
    <property type="match status" value="1"/>
</dbReference>
<dbReference type="Pfam" id="PF00707">
    <property type="entry name" value="IF3_C"/>
    <property type="match status" value="1"/>
</dbReference>
<dbReference type="Pfam" id="PF05198">
    <property type="entry name" value="IF3_N"/>
    <property type="match status" value="1"/>
</dbReference>
<dbReference type="SUPFAM" id="SSF55200">
    <property type="entry name" value="Translation initiation factor IF3, C-terminal domain"/>
    <property type="match status" value="1"/>
</dbReference>
<dbReference type="SUPFAM" id="SSF54364">
    <property type="entry name" value="Translation initiation factor IF3, N-terminal domain"/>
    <property type="match status" value="1"/>
</dbReference>
<dbReference type="PROSITE" id="PS00938">
    <property type="entry name" value="IF3"/>
    <property type="match status" value="1"/>
</dbReference>
<evidence type="ECO:0000255" key="1">
    <source>
        <dbReference type="HAMAP-Rule" id="MF_00080"/>
    </source>
</evidence>
<evidence type="ECO:0000305" key="2"/>